<gene>
    <name evidence="9" type="primary">subA</name>
    <name type="ORF">MAA_07496</name>
</gene>
<accession>E9F5E7</accession>
<evidence type="ECO:0000255" key="1"/>
<evidence type="ECO:0000255" key="2">
    <source>
        <dbReference type="PROSITE-ProRule" id="PRU00258"/>
    </source>
</evidence>
<evidence type="ECO:0000255" key="3">
    <source>
        <dbReference type="PROSITE-ProRule" id="PRU01348"/>
    </source>
</evidence>
<evidence type="ECO:0000255" key="4">
    <source>
        <dbReference type="PROSITE-ProRule" id="PRU01363"/>
    </source>
</evidence>
<evidence type="ECO:0000255" key="5">
    <source>
        <dbReference type="PROSITE-ProRule" id="PRU10022"/>
    </source>
</evidence>
<evidence type="ECO:0000256" key="6">
    <source>
        <dbReference type="SAM" id="MobiDB-lite"/>
    </source>
</evidence>
<evidence type="ECO:0000269" key="7">
    <source>
    </source>
</evidence>
<evidence type="ECO:0000269" key="8">
    <source>
    </source>
</evidence>
<evidence type="ECO:0000303" key="9">
    <source>
    </source>
</evidence>
<evidence type="ECO:0000305" key="10">
    <source>
    </source>
</evidence>
<evidence type="ECO:0000305" key="11">
    <source>
    </source>
</evidence>
<proteinExistence type="evidence at protein level"/>
<feature type="chain" id="PRO_0000451337" description="Non-reducing polyketide synthase subA">
    <location>
        <begin position="1"/>
        <end position="2181"/>
    </location>
</feature>
<feature type="domain" description="Ketosynthase family 3 (KS3)" evidence="3">
    <location>
        <begin position="347"/>
        <end position="779"/>
    </location>
</feature>
<feature type="domain" description="PKS/mFAS DH" evidence="4">
    <location>
        <begin position="1269"/>
        <end position="1579"/>
    </location>
</feature>
<feature type="domain" description="Carrier" evidence="2">
    <location>
        <begin position="1677"/>
        <end position="1753"/>
    </location>
</feature>
<feature type="region of interest" description="N-terminal acylcarrier protein transacylase domain (SAT)" evidence="1">
    <location>
        <begin position="74"/>
        <end position="180"/>
    </location>
</feature>
<feature type="region of interest" description="Malonyl-CoA:ACP transacylase (MAT) domain" evidence="1">
    <location>
        <begin position="891"/>
        <end position="1193"/>
    </location>
</feature>
<feature type="region of interest" description="N-terminal hotdog fold" evidence="4">
    <location>
        <begin position="1269"/>
        <end position="1401"/>
    </location>
</feature>
<feature type="region of interest" description="Product template (PT) domain" evidence="1">
    <location>
        <begin position="1276"/>
        <end position="1573"/>
    </location>
</feature>
<feature type="region of interest" description="C-terminal hotdog fold" evidence="4">
    <location>
        <begin position="1425"/>
        <end position="1579"/>
    </location>
</feature>
<feature type="region of interest" description="Disordered" evidence="6">
    <location>
        <begin position="1652"/>
        <end position="1673"/>
    </location>
</feature>
<feature type="region of interest" description="Methyltransferase (CMeT) domain" evidence="1">
    <location>
        <begin position="1982"/>
        <end position="2164"/>
    </location>
</feature>
<feature type="compositionally biased region" description="Low complexity" evidence="6">
    <location>
        <begin position="1653"/>
        <end position="1670"/>
    </location>
</feature>
<feature type="active site" description="For beta-ketoacyl synthase activity" evidence="3">
    <location>
        <position position="525"/>
    </location>
</feature>
<feature type="active site" description="For beta-ketoacyl synthase activity" evidence="3">
    <location>
        <position position="661"/>
    </location>
</feature>
<feature type="active site" description="For beta-ketoacyl synthase activity" evidence="3">
    <location>
        <position position="702"/>
    </location>
</feature>
<feature type="active site" description="For acyl/malonyl transferase activity" evidence="5">
    <location>
        <position position="977"/>
    </location>
</feature>
<feature type="modified residue" description="O-(pantetheine 4'-phosphoryl)serine" evidence="2">
    <location>
        <position position="1713"/>
    </location>
</feature>
<keyword id="KW-0489">Methyltransferase</keyword>
<keyword id="KW-0511">Multifunctional enzyme</keyword>
<keyword id="KW-0596">Phosphopantetheine</keyword>
<keyword id="KW-0597">Phosphoprotein</keyword>
<keyword id="KW-0808">Transferase</keyword>
<name>SUBA_METRA</name>
<sequence length="2181" mass="239620">MRVNTPSLLICGPMISQADAAYLPQVRSSLVHNKDLSYLREAVSELPNLWLRLVREEPSLGEIDVALFLDNLSQWVKGNSTQPTASRDSRNTQWAVLTVLVHIVEYMEYLDNFSSRDEDGCGHLDAHAALLDHLHDGGIQGLCIGLLTALALACAPSHAEIAKYGAVAVRLALCCGAYIDLNEAKSPAKTICVTTRWPGDDGDDKGDIDRKCDEQLQAILDTYPDAYKSVQTDVSTVTITTNEGDVLALLGELEKGGATSKRIDLHGRYHYGGNQAALLKLLQLSKALPMLQFPRGSRLVVPVRNNCSGSIVEDNTALHEMALRCILVENAEWLKTISSSISANTRQAQLLVLGPVNCVPRSLLLRSPQPISLSVSGKADNIYPDQSIAIIGSSCCFPGAENPRQLWEFIRTKQTHGVVDAAGSFDCSFFRKSPREAEYMDPQQRLGLHLAQEALESGGYFSPSSSATKNVGCYLGISSCDYEDNVNSHPPTAYSFTGTARAFASGRISHFFGLTGPSMVIDTACSSSGVAINTACRAIQSGECTMALAGGINLISREARTQENLAAASFLSPTGECRPFDSKANGYRRGEGGGLVLLKKLSSAVADGDVVLGVIAATAVNQSEGNKSITLPSSESQTSLYQRVLESANLKPRHISYVEAHGTGTQKGDPIECQSIRTVFGGTVRPACRQLHVGSIKSNIGHSEAASGIAALLKVLQMLHHRVIPPQANFEELNPAISPLHDDNIEISRHTKPWEERFRAALVNNYGASGTNAAMLVCQPPSIQHRLPLFPNRPCHYPILLTSHSNESLQLYCRNILRFIENQNNVVSDEEVLANTAFHLAQRQDHSLSFRLTFSVSSIEELKLKLQQQSTSQSYKDGPIQKHSAQPVVVVLAGQTGRRVRLSHEIYASSELLQRHLGRCDRALQTMGFASLFPGIFDTEPLEDLVQAHCMLFSLQYSVAMSWIDSGLKIDALVGHSLGQLTALCISGMLSLQDGLKLISGRASLIQSKWGAECGAMLSVDADAETVQNLADSLPAGYKVEIACYNSSQSHVVVGTKAAITAFEKAADLRGVSLRRLAISHGFHSEMIDCILPDYNKLVQGLVLHPPAIAIEPCSQSGHSWANATPEIIARQSREPVYFANAISRLEKRFGSCIWLEAGWGSAGVNMARRALTHGPTRSLSTHSFYPAALGEPDSVKALADTTINLWNAGIRVQFWLYHRSQTGSPAPLELPLHPFMKSEYLLPVVKHSKKAQSEKDGQPIIQEKATLVSLIGKTQNAGVQTVEYSINQNSEEYSVYVRGRTVFEHLLAPVSMYIESATRAFRLLSTHKLVSFSTSASMELKNLKLHAPFGFDLQKSLRMILRKLGEDAWEFRVESHPIHEKERGSVLQATGVITLQEVYSHLAPHRPLLRRLYDRCEELGKDVSASVVQGDFIKKIINSVARYDDRYIGVRSITSKGFETVAHVFEPEIASQFTPTTPFNPLLLDNFLLIAEIQANNLGGVTPDEIYVGNGFDAATAYTNAEDSEPSTKGHWVGLYSFDHQENDGILCDIFIFCAERKILSMTILGAKFQKIAISSLKRALKTINGVPQTSGGRTPSSSITEFISGDDASPCLPIPGADKPIFIREDDFGFMTTSGHMDEENHLIPEYDVISGSSRSTSSSPPSLESRSQAMDTEEITEGAGSALFNLLSNHLNYPKGLSPDTPLGALGLDSLVAIQLQSDIEQMFGKNSQLMDINESSTFSTLFHTIFPQQQTDQFGFVPLHDQTGKDRLESAVPLRLGYSHIKHAAPSFNDSLDRSNTLFIRQVPHAMDALKQNISSTIKAAGFHDFFSDVHPRQRSLVLAYIVHAFRELGCDIRSLEVGDELPSVQFKPKYQNVMNRLFDILGSEGVINVLNKRYLGGLASFPERSAEDMHKAIMNDYPSYHPDHKLLHTTGARLADCISGKVDPLQILFQNATSIKLLEDVYVKSPMFGTGNLLLGEFMNCLFSYNKTPDRLNHIRILEIGAGTGATTQLVVDRLLACNVDFTYTFTDVSAALVASAREKLTSRYGQHQRFDMEFETLNIEKEPPASFAQSYDLVISANCIHATRDLRKSCSNIEKLLRKDGGVLCLLELTRPLEWLDCVFGLLDGWWRFDDHRTYALAGEQDWKTILLQSGFGHVDWTDDGSREAQQLRLITAWR</sequence>
<reference key="1">
    <citation type="journal article" date="2011" name="PLoS Genet.">
        <title>Genome sequencing and comparative transcriptomics of the model entomopathogenic fungi Metarhizium anisopliae and M. acridum.</title>
        <authorList>
            <person name="Gao Q."/>
            <person name="Jin K."/>
            <person name="Ying S.-H."/>
            <person name="Zhang Y."/>
            <person name="Xiao G."/>
            <person name="Shang Y."/>
            <person name="Duan Z."/>
            <person name="Hu X."/>
            <person name="Xie X.-Q."/>
            <person name="Zhou G."/>
            <person name="Peng G."/>
            <person name="Luo Z."/>
            <person name="Huang W."/>
            <person name="Wang B."/>
            <person name="Fang W."/>
            <person name="Wang S."/>
            <person name="Zhong Y."/>
            <person name="Ma L.-J."/>
            <person name="St Leger R.J."/>
            <person name="Zhao G.-P."/>
            <person name="Pei Y."/>
            <person name="Feng M.-G."/>
            <person name="Xia Y."/>
            <person name="Wang C."/>
        </authorList>
    </citation>
    <scope>NUCLEOTIDE SEQUENCE [LARGE SCALE GENOMIC DNA]</scope>
    <source>
        <strain>ARSEF 23 / ATCC MYA-3075</strain>
    </source>
</reference>
<reference key="2">
    <citation type="journal article" date="2014" name="Proc. Natl. Acad. Sci. U.S.A.">
        <title>Trajectory and genomic determinants of fungal-pathogen speciation and host adaptation.</title>
        <authorList>
            <person name="Hu X."/>
            <person name="Xiao G."/>
            <person name="Zheng P."/>
            <person name="Shang Y."/>
            <person name="Su Y."/>
            <person name="Zhang X."/>
            <person name="Liu X."/>
            <person name="Zhan S."/>
            <person name="St Leger R.J."/>
            <person name="Wang C."/>
        </authorList>
    </citation>
    <scope>GENOME REANNOTATION</scope>
    <source>
        <strain>ARSEF 23 / ATCC MYA-3075</strain>
    </source>
</reference>
<reference key="3">
    <citation type="journal article" date="2016" name="J. Antibiot.">
        <title>New natural products isolated from Metarhizium robertsii ARSEF 23 by chemical screening and identification of the gene cluster through engineered biosynthesis in Aspergillus nidulans A1145.</title>
        <authorList>
            <person name="Kato H."/>
            <person name="Tsunematsu Y."/>
            <person name="Yamamoto T."/>
            <person name="Namiki T."/>
            <person name="Kishimoto S."/>
            <person name="Noguchi H."/>
            <person name="Watanabe K."/>
        </authorList>
    </citation>
    <scope>FUNCTION</scope>
    <scope>CATALYTIC ACTIVITY</scope>
    <scope>PATHWAY</scope>
</reference>
<reference key="4">
    <citation type="journal article" date="2022" name="Environ. Microbiol.">
        <title>Mutation of a prenyltransferase results in accumulation of subglutinols and destruxins and enhanced virulence in the insect pathogen, Metarhizium anisopliae.</title>
        <authorList>
            <person name="Li C."/>
            <person name="Huang W."/>
            <person name="Zhou T."/>
            <person name="Zhao Q."/>
            <person name="Huang P."/>
            <person name="Qi P."/>
            <person name="Huang S."/>
            <person name="Huang S."/>
            <person name="Keyhani N.O."/>
            <person name="Huang Z."/>
        </authorList>
    </citation>
    <scope>FUNCTION</scope>
    <scope>INDUCTION</scope>
</reference>
<comment type="function">
    <text evidence="7 10 11">Non-reducing polyketide synthase; part of the gene cluster that mediates the biosynthesis of the immunosuppressants subglutinols, meroterpenoids consisting of an alpha-pyrone (4-hydroxy-5,6-dimethyl-2-pyrone) moiety attached to a decalin core fused to a five-membered cyclic ether carrying a prenylside chain (PubMed:27189118). The first step of the pathway is the synthesis of the alpha-pyrone moiety by the polyketide synthase subA via condensation of one acetyl-CoA starter unit with 3 malonyl-CoA units and 2 methylations (PubMed:27189118). The alpha-pyrone is then combined with geranylgeranyl pyrophosphate (GGPP) formed by the GGPP synthase subD through the action of the prenyltransferase subC to yield a linear alpha-pyrone diterpenoid (PubMed:27189118). Subsequent steps in the subglutinol biosynthetic pathway involve the decalin core formation, which is thought to be initiated by the epoxidation of the C10-C11 olefin by the FAD-dependent oxidoreductase subE (Probable). The following cyclization cascade would be catalyzed by the terpene cyclase subB (Probable). Lastly, the FAD-dependent dehydrogenase subF probably catalyzes the five-membered cyclic ether formation to complete the formation of subglutinol A (Probable). Subsequent redox reactions appear to give rise to subglutinol C and D, however, it remains unclear which enzymes are responsible for these transformations (Probable). SubD may have secondary function in the conversion of the identified subglutinols to subglutinol analog 45, which seems to be the major product of the cluster (PubMed:34863012).</text>
</comment>
<comment type="pathway">
    <text evidence="7">Secondary metabolite biosynthesis; terpenoid biosynthesis.</text>
</comment>
<comment type="induction">
    <text evidence="8">The subglutinol cluster is highly expressed when mycelia and hyphae are transferred to fresh media for a 3 hour induction period, remaining expressed under conditions of heat shock (PubMed:34863012). The cluster is repressed in cultures reaching stationary phase or in early germinating cultures, as well as under conditions of UV, salt and oxidative stress (PubMed:34863012).</text>
</comment>
<comment type="domain">
    <text evidence="10">Multidomain protein; including a starter unit:ACP transacylase (SAT) that selects the starter unit; a ketosynthase (KS) that catalyzes repeated decarboxylative condensation to elongate the polyketide backbone; a malonyl-CoA:ACP transacylase (MAT) that selects and transfers the extender unit malonyl-CoA; a product template (PT) domain that controls the immediate cyclization regioselectivity of the reactive polyketide backbone; a methyltransferase (CMeT) domain responsible for methylations; and an acyl-carrier protein (ACP) that serves as the tether of the growing and completed polyketide via its phosphopantetheinyl arm.</text>
</comment>
<organism>
    <name type="scientific">Metarhizium robertsii (strain ARSEF 23 / ATCC MYA-3075)</name>
    <name type="common">Metarhizium anisopliae (strain ARSEF 23)</name>
    <dbReference type="NCBI Taxonomy" id="655844"/>
    <lineage>
        <taxon>Eukaryota</taxon>
        <taxon>Fungi</taxon>
        <taxon>Dikarya</taxon>
        <taxon>Ascomycota</taxon>
        <taxon>Pezizomycotina</taxon>
        <taxon>Sordariomycetes</taxon>
        <taxon>Hypocreomycetidae</taxon>
        <taxon>Hypocreales</taxon>
        <taxon>Clavicipitaceae</taxon>
        <taxon>Metarhizium</taxon>
    </lineage>
</organism>
<protein>
    <recommendedName>
        <fullName evidence="9">Non-reducing polyketide synthase subA</fullName>
        <ecNumber evidence="7">2.3.1.-</ecNumber>
    </recommendedName>
    <alternativeName>
        <fullName evidence="9">Subglutinol biosynthesis cluster protein A</fullName>
    </alternativeName>
</protein>
<dbReference type="EC" id="2.3.1.-" evidence="7"/>
<dbReference type="EMBL" id="ADNJ02000014">
    <property type="protein sequence ID" value="EFY96950.1"/>
    <property type="molecule type" value="Genomic_DNA"/>
</dbReference>
<dbReference type="RefSeq" id="XP_007823685.1">
    <property type="nucleotide sequence ID" value="XM_007825494.1"/>
</dbReference>
<dbReference type="SMR" id="E9F5E7"/>
<dbReference type="GeneID" id="19261782"/>
<dbReference type="KEGG" id="maj:MAA_07496"/>
<dbReference type="HOGENOM" id="CLU_000022_6_3_1"/>
<dbReference type="OrthoDB" id="329835at2759"/>
<dbReference type="UniPathway" id="UPA00213"/>
<dbReference type="Proteomes" id="UP000002498">
    <property type="component" value="Unassembled WGS sequence"/>
</dbReference>
<dbReference type="GO" id="GO:0004315">
    <property type="term" value="F:3-oxoacyl-[acyl-carrier-protein] synthase activity"/>
    <property type="evidence" value="ECO:0007669"/>
    <property type="project" value="InterPro"/>
</dbReference>
<dbReference type="GO" id="GO:0004312">
    <property type="term" value="F:fatty acid synthase activity"/>
    <property type="evidence" value="ECO:0007669"/>
    <property type="project" value="TreeGrafter"/>
</dbReference>
<dbReference type="GO" id="GO:0008168">
    <property type="term" value="F:methyltransferase activity"/>
    <property type="evidence" value="ECO:0007669"/>
    <property type="project" value="UniProtKB-KW"/>
</dbReference>
<dbReference type="GO" id="GO:0006633">
    <property type="term" value="P:fatty acid biosynthetic process"/>
    <property type="evidence" value="ECO:0007669"/>
    <property type="project" value="InterPro"/>
</dbReference>
<dbReference type="GO" id="GO:0032259">
    <property type="term" value="P:methylation"/>
    <property type="evidence" value="ECO:0007669"/>
    <property type="project" value="UniProtKB-KW"/>
</dbReference>
<dbReference type="GO" id="GO:0044550">
    <property type="term" value="P:secondary metabolite biosynthetic process"/>
    <property type="evidence" value="ECO:0007669"/>
    <property type="project" value="TreeGrafter"/>
</dbReference>
<dbReference type="GO" id="GO:0016114">
    <property type="term" value="P:terpenoid biosynthetic process"/>
    <property type="evidence" value="ECO:0007669"/>
    <property type="project" value="UniProtKB-UniPathway"/>
</dbReference>
<dbReference type="CDD" id="cd02440">
    <property type="entry name" value="AdoMet_MTases"/>
    <property type="match status" value="1"/>
</dbReference>
<dbReference type="CDD" id="cd00833">
    <property type="entry name" value="PKS"/>
    <property type="match status" value="1"/>
</dbReference>
<dbReference type="Gene3D" id="3.30.70.3290">
    <property type="match status" value="1"/>
</dbReference>
<dbReference type="Gene3D" id="3.40.47.10">
    <property type="match status" value="1"/>
</dbReference>
<dbReference type="Gene3D" id="1.10.1200.10">
    <property type="entry name" value="ACP-like"/>
    <property type="match status" value="1"/>
</dbReference>
<dbReference type="Gene3D" id="3.40.366.10">
    <property type="entry name" value="Malonyl-Coenzyme A Acyl Carrier Protein, domain 2"/>
    <property type="match status" value="2"/>
</dbReference>
<dbReference type="Gene3D" id="3.10.129.110">
    <property type="entry name" value="Polyketide synthase dehydratase"/>
    <property type="match status" value="1"/>
</dbReference>
<dbReference type="Gene3D" id="3.40.50.150">
    <property type="entry name" value="Vaccinia Virus protein VP39"/>
    <property type="match status" value="1"/>
</dbReference>
<dbReference type="InterPro" id="IPR001227">
    <property type="entry name" value="Ac_transferase_dom_sf"/>
</dbReference>
<dbReference type="InterPro" id="IPR036736">
    <property type="entry name" value="ACP-like_sf"/>
</dbReference>
<dbReference type="InterPro" id="IPR014043">
    <property type="entry name" value="Acyl_transferase_dom"/>
</dbReference>
<dbReference type="InterPro" id="IPR016035">
    <property type="entry name" value="Acyl_Trfase/lysoPLipase"/>
</dbReference>
<dbReference type="InterPro" id="IPR018201">
    <property type="entry name" value="Ketoacyl_synth_AS"/>
</dbReference>
<dbReference type="InterPro" id="IPR014031">
    <property type="entry name" value="Ketoacyl_synth_C"/>
</dbReference>
<dbReference type="InterPro" id="IPR014030">
    <property type="entry name" value="Ketoacyl_synth_N"/>
</dbReference>
<dbReference type="InterPro" id="IPR016036">
    <property type="entry name" value="Malonyl_transacylase_ACP-bd"/>
</dbReference>
<dbReference type="InterPro" id="IPR013217">
    <property type="entry name" value="Methyltransf_12"/>
</dbReference>
<dbReference type="InterPro" id="IPR020841">
    <property type="entry name" value="PKS_Beta-ketoAc_synthase_dom"/>
</dbReference>
<dbReference type="InterPro" id="IPR042104">
    <property type="entry name" value="PKS_dehydratase_sf"/>
</dbReference>
<dbReference type="InterPro" id="IPR049900">
    <property type="entry name" value="PKS_mFAS_DH"/>
</dbReference>
<dbReference type="InterPro" id="IPR050091">
    <property type="entry name" value="PKS_NRPS_Biosynth_Enz"/>
</dbReference>
<dbReference type="InterPro" id="IPR009081">
    <property type="entry name" value="PP-bd_ACP"/>
</dbReference>
<dbReference type="InterPro" id="IPR029063">
    <property type="entry name" value="SAM-dependent_MTases_sf"/>
</dbReference>
<dbReference type="InterPro" id="IPR032088">
    <property type="entry name" value="SAT"/>
</dbReference>
<dbReference type="InterPro" id="IPR016039">
    <property type="entry name" value="Thiolase-like"/>
</dbReference>
<dbReference type="PANTHER" id="PTHR43775">
    <property type="entry name" value="FATTY ACID SYNTHASE"/>
    <property type="match status" value="1"/>
</dbReference>
<dbReference type="PANTHER" id="PTHR43775:SF21">
    <property type="entry name" value="NON-REDUCING POLYKETIDE SYNTHASE AUSA-RELATED"/>
    <property type="match status" value="1"/>
</dbReference>
<dbReference type="Pfam" id="PF00698">
    <property type="entry name" value="Acyl_transf_1"/>
    <property type="match status" value="1"/>
</dbReference>
<dbReference type="Pfam" id="PF18558">
    <property type="entry name" value="HTH_51"/>
    <property type="match status" value="1"/>
</dbReference>
<dbReference type="Pfam" id="PF00109">
    <property type="entry name" value="ketoacyl-synt"/>
    <property type="match status" value="1"/>
</dbReference>
<dbReference type="Pfam" id="PF02801">
    <property type="entry name" value="Ketoacyl-synt_C"/>
    <property type="match status" value="1"/>
</dbReference>
<dbReference type="Pfam" id="PF08242">
    <property type="entry name" value="Methyltransf_12"/>
    <property type="match status" value="1"/>
</dbReference>
<dbReference type="Pfam" id="PF00550">
    <property type="entry name" value="PP-binding"/>
    <property type="match status" value="1"/>
</dbReference>
<dbReference type="Pfam" id="PF16073">
    <property type="entry name" value="SAT"/>
    <property type="match status" value="1"/>
</dbReference>
<dbReference type="SMART" id="SM00827">
    <property type="entry name" value="PKS_AT"/>
    <property type="match status" value="1"/>
</dbReference>
<dbReference type="SMART" id="SM00825">
    <property type="entry name" value="PKS_KS"/>
    <property type="match status" value="1"/>
</dbReference>
<dbReference type="SUPFAM" id="SSF47336">
    <property type="entry name" value="ACP-like"/>
    <property type="match status" value="1"/>
</dbReference>
<dbReference type="SUPFAM" id="SSF52151">
    <property type="entry name" value="FabD/lysophospholipase-like"/>
    <property type="match status" value="1"/>
</dbReference>
<dbReference type="SUPFAM" id="SSF55048">
    <property type="entry name" value="Probable ACP-binding domain of malonyl-CoA ACP transacylase"/>
    <property type="match status" value="1"/>
</dbReference>
<dbReference type="SUPFAM" id="SSF53335">
    <property type="entry name" value="S-adenosyl-L-methionine-dependent methyltransferases"/>
    <property type="match status" value="1"/>
</dbReference>
<dbReference type="SUPFAM" id="SSF53901">
    <property type="entry name" value="Thiolase-like"/>
    <property type="match status" value="1"/>
</dbReference>
<dbReference type="PROSITE" id="PS50075">
    <property type="entry name" value="CARRIER"/>
    <property type="match status" value="1"/>
</dbReference>
<dbReference type="PROSITE" id="PS00606">
    <property type="entry name" value="KS3_1"/>
    <property type="match status" value="1"/>
</dbReference>
<dbReference type="PROSITE" id="PS52004">
    <property type="entry name" value="KS3_2"/>
    <property type="match status" value="1"/>
</dbReference>
<dbReference type="PROSITE" id="PS52019">
    <property type="entry name" value="PKS_MFAS_DH"/>
    <property type="match status" value="1"/>
</dbReference>